<name>LEUD_MYCPA</name>
<feature type="chain" id="PRO_0000141839" description="3-isopropylmalate dehydratase small subunit">
    <location>
        <begin position="1"/>
        <end position="198"/>
    </location>
</feature>
<keyword id="KW-0028">Amino-acid biosynthesis</keyword>
<keyword id="KW-0100">Branched-chain amino acid biosynthesis</keyword>
<keyword id="KW-0432">Leucine biosynthesis</keyword>
<keyword id="KW-0456">Lyase</keyword>
<keyword id="KW-1185">Reference proteome</keyword>
<organism>
    <name type="scientific">Mycolicibacterium paratuberculosis (strain ATCC BAA-968 / K-10)</name>
    <name type="common">Mycobacterium paratuberculosis</name>
    <dbReference type="NCBI Taxonomy" id="262316"/>
    <lineage>
        <taxon>Bacteria</taxon>
        <taxon>Bacillati</taxon>
        <taxon>Actinomycetota</taxon>
        <taxon>Actinomycetes</taxon>
        <taxon>Mycobacteriales</taxon>
        <taxon>Mycobacteriaceae</taxon>
        <taxon>Mycobacterium</taxon>
        <taxon>Mycobacterium avium complex (MAC)</taxon>
    </lineage>
</organism>
<sequence>MEAFHTHTGIGVPLRRSNVDTDQIIPAVYLKRVTRTGFEDGLFASWRSDPSFVLNLSPFDRGSVLVAGPDFGTGSSREHAVWALMDYGFRVVISSRFGDIFRGNAGKAGLLAAEVSQDGVELLWKLIEQSPGLEITANLQDRNITAGTTVLPFKIDDHTAWRLLEGLDDIALTLRKLDRIESYEATYPDWKPRTSPVA</sequence>
<proteinExistence type="inferred from homology"/>
<gene>
    <name evidence="1" type="primary">leuD</name>
    <name type="ordered locus">MAP_3025c</name>
</gene>
<comment type="function">
    <text evidence="1">Catalyzes the isomerization between 2-isopropylmalate and 3-isopropylmalate, via the formation of 2-isopropylmaleate.</text>
</comment>
<comment type="catalytic activity">
    <reaction evidence="1">
        <text>(2R,3S)-3-isopropylmalate = (2S)-2-isopropylmalate</text>
        <dbReference type="Rhea" id="RHEA:32287"/>
        <dbReference type="ChEBI" id="CHEBI:1178"/>
        <dbReference type="ChEBI" id="CHEBI:35121"/>
        <dbReference type="EC" id="4.2.1.33"/>
    </reaction>
</comment>
<comment type="pathway">
    <text evidence="1">Amino-acid biosynthesis; L-leucine biosynthesis; L-leucine from 3-methyl-2-oxobutanoate: step 2/4.</text>
</comment>
<comment type="subunit">
    <text evidence="1">Heterodimer of LeuC and LeuD.</text>
</comment>
<comment type="similarity">
    <text evidence="1">Belongs to the LeuD family. LeuD type 1 subfamily.</text>
</comment>
<comment type="sequence caution" evidence="2">
    <conflict type="erroneous initiation">
        <sequence resource="EMBL-CDS" id="AAS05573"/>
    </conflict>
</comment>
<accession>Q73VI8</accession>
<protein>
    <recommendedName>
        <fullName evidence="1">3-isopropylmalate dehydratase small subunit</fullName>
        <ecNumber evidence="1">4.2.1.33</ecNumber>
    </recommendedName>
    <alternativeName>
        <fullName evidence="1">Alpha-IPM isomerase</fullName>
        <shortName evidence="1">IPMI</shortName>
    </alternativeName>
    <alternativeName>
        <fullName evidence="1">Isopropylmalate isomerase</fullName>
    </alternativeName>
</protein>
<evidence type="ECO:0000255" key="1">
    <source>
        <dbReference type="HAMAP-Rule" id="MF_01031"/>
    </source>
</evidence>
<evidence type="ECO:0000305" key="2"/>
<dbReference type="EC" id="4.2.1.33" evidence="1"/>
<dbReference type="EMBL" id="AE016958">
    <property type="protein sequence ID" value="AAS05573.1"/>
    <property type="status" value="ALT_INIT"/>
    <property type="molecule type" value="Genomic_DNA"/>
</dbReference>
<dbReference type="RefSeq" id="WP_003875017.1">
    <property type="nucleotide sequence ID" value="NZ_CP106873.1"/>
</dbReference>
<dbReference type="SMR" id="Q73VI8"/>
<dbReference type="STRING" id="262316.MAP_3025c"/>
<dbReference type="KEGG" id="mpa:MAP_3025c"/>
<dbReference type="PATRIC" id="fig|262316.17.peg.3205"/>
<dbReference type="eggNOG" id="COG0066">
    <property type="taxonomic scope" value="Bacteria"/>
</dbReference>
<dbReference type="HOGENOM" id="CLU_081378_0_1_11"/>
<dbReference type="UniPathway" id="UPA00048">
    <property type="reaction ID" value="UER00071"/>
</dbReference>
<dbReference type="Proteomes" id="UP000000580">
    <property type="component" value="Chromosome"/>
</dbReference>
<dbReference type="GO" id="GO:0009316">
    <property type="term" value="C:3-isopropylmalate dehydratase complex"/>
    <property type="evidence" value="ECO:0007669"/>
    <property type="project" value="InterPro"/>
</dbReference>
<dbReference type="GO" id="GO:0003861">
    <property type="term" value="F:3-isopropylmalate dehydratase activity"/>
    <property type="evidence" value="ECO:0007669"/>
    <property type="project" value="UniProtKB-UniRule"/>
</dbReference>
<dbReference type="GO" id="GO:0009098">
    <property type="term" value="P:L-leucine biosynthetic process"/>
    <property type="evidence" value="ECO:0007669"/>
    <property type="project" value="UniProtKB-UniRule"/>
</dbReference>
<dbReference type="CDD" id="cd01577">
    <property type="entry name" value="IPMI_Swivel"/>
    <property type="match status" value="1"/>
</dbReference>
<dbReference type="FunFam" id="3.20.19.10:FF:000003">
    <property type="entry name" value="3-isopropylmalate dehydratase small subunit"/>
    <property type="match status" value="1"/>
</dbReference>
<dbReference type="Gene3D" id="3.20.19.10">
    <property type="entry name" value="Aconitase, domain 4"/>
    <property type="match status" value="1"/>
</dbReference>
<dbReference type="HAMAP" id="MF_01031">
    <property type="entry name" value="LeuD_type1"/>
    <property type="match status" value="1"/>
</dbReference>
<dbReference type="InterPro" id="IPR004431">
    <property type="entry name" value="3-IsopropMal_deHydase_ssu"/>
</dbReference>
<dbReference type="InterPro" id="IPR015928">
    <property type="entry name" value="Aconitase/3IPM_dehydase_swvl"/>
</dbReference>
<dbReference type="InterPro" id="IPR000573">
    <property type="entry name" value="AconitaseA/IPMdHydase_ssu_swvl"/>
</dbReference>
<dbReference type="InterPro" id="IPR033940">
    <property type="entry name" value="IPMI_Swivel"/>
</dbReference>
<dbReference type="InterPro" id="IPR050075">
    <property type="entry name" value="LeuD"/>
</dbReference>
<dbReference type="NCBIfam" id="TIGR00171">
    <property type="entry name" value="leuD"/>
    <property type="match status" value="1"/>
</dbReference>
<dbReference type="NCBIfam" id="NF002458">
    <property type="entry name" value="PRK01641.1"/>
    <property type="match status" value="1"/>
</dbReference>
<dbReference type="PANTHER" id="PTHR43345:SF5">
    <property type="entry name" value="3-ISOPROPYLMALATE DEHYDRATASE SMALL SUBUNIT"/>
    <property type="match status" value="1"/>
</dbReference>
<dbReference type="PANTHER" id="PTHR43345">
    <property type="entry name" value="3-ISOPROPYLMALATE DEHYDRATASE SMALL SUBUNIT 2-RELATED-RELATED"/>
    <property type="match status" value="1"/>
</dbReference>
<dbReference type="Pfam" id="PF00694">
    <property type="entry name" value="Aconitase_C"/>
    <property type="match status" value="1"/>
</dbReference>
<dbReference type="SUPFAM" id="SSF52016">
    <property type="entry name" value="LeuD/IlvD-like"/>
    <property type="match status" value="1"/>
</dbReference>
<reference key="1">
    <citation type="journal article" date="2005" name="Proc. Natl. Acad. Sci. U.S.A.">
        <title>The complete genome sequence of Mycobacterium avium subspecies paratuberculosis.</title>
        <authorList>
            <person name="Li L."/>
            <person name="Bannantine J.P."/>
            <person name="Zhang Q."/>
            <person name="Amonsin A."/>
            <person name="May B.J."/>
            <person name="Alt D."/>
            <person name="Banerji N."/>
            <person name="Kanjilal S."/>
            <person name="Kapur V."/>
        </authorList>
    </citation>
    <scope>NUCLEOTIDE SEQUENCE [LARGE SCALE GENOMIC DNA]</scope>
    <source>
        <strain>ATCC BAA-968 / K-10</strain>
    </source>
</reference>